<sequence length="325" mass="35389">MIVVGIDHGTSGITACVMENKTVKSIFKMKRTEINENSFLKELEKHVNLNDIDLMGVCYSMGDGIDNITDIKKVDNRGVINLEGIGKKVGGGTRVYDEIKSSNIPAVVIPGLHKDVKSMDERFNALFSHIASPEKISICYNAYKTFGFENFILSDISSNTVTLLIKNGKIFGGFDACVGAVGILHGPLDLELIRNIDAKKITANEAFSKAGVVKVTESYKGVEDTKFEIMSNYKNNEKCKLAVDSLVLSVSMEINSLMFLTPDKNVILAGSIGIWENPNVSEMIKENIDGNVLVLNEESGAIGSAMIAEDILNGKKDILGIPVDF</sequence>
<feature type="chain" id="PRO_1000149871" description="UPF0285 protein MmarC5_0962">
    <location>
        <begin position="1"/>
        <end position="325"/>
    </location>
</feature>
<protein>
    <recommendedName>
        <fullName evidence="1">UPF0285 protein MmarC5_0962</fullName>
    </recommendedName>
</protein>
<proteinExistence type="inferred from homology"/>
<gene>
    <name type="ordered locus">MmarC5_0962</name>
</gene>
<name>Y962_METM5</name>
<organism>
    <name type="scientific">Methanococcus maripaludis (strain C5 / ATCC BAA-1333)</name>
    <dbReference type="NCBI Taxonomy" id="402880"/>
    <lineage>
        <taxon>Archaea</taxon>
        <taxon>Methanobacteriati</taxon>
        <taxon>Methanobacteriota</taxon>
        <taxon>Methanomada group</taxon>
        <taxon>Methanococci</taxon>
        <taxon>Methanococcales</taxon>
        <taxon>Methanococcaceae</taxon>
        <taxon>Methanococcus</taxon>
    </lineage>
</organism>
<accession>A4FYI4</accession>
<evidence type="ECO:0000255" key="1">
    <source>
        <dbReference type="HAMAP-Rule" id="MF_01087"/>
    </source>
</evidence>
<dbReference type="EMBL" id="CP000609">
    <property type="protein sequence ID" value="ABO35268.1"/>
    <property type="molecule type" value="Genomic_DNA"/>
</dbReference>
<dbReference type="RefSeq" id="WP_011868722.1">
    <property type="nucleotide sequence ID" value="NC_009135.1"/>
</dbReference>
<dbReference type="SMR" id="A4FYI4"/>
<dbReference type="STRING" id="402880.MmarC5_0962"/>
<dbReference type="GeneID" id="4928529"/>
<dbReference type="KEGG" id="mmq:MmarC5_0962"/>
<dbReference type="eggNOG" id="arCOG04885">
    <property type="taxonomic scope" value="Archaea"/>
</dbReference>
<dbReference type="HOGENOM" id="CLU_846254_0_0_2"/>
<dbReference type="OrthoDB" id="235676at2157"/>
<dbReference type="Proteomes" id="UP000000253">
    <property type="component" value="Chromosome"/>
</dbReference>
<dbReference type="HAMAP" id="MF_01087">
    <property type="entry name" value="UPF0285"/>
    <property type="match status" value="1"/>
</dbReference>
<dbReference type="InterPro" id="IPR043129">
    <property type="entry name" value="ATPase_NBD"/>
</dbReference>
<dbReference type="InterPro" id="IPR016735">
    <property type="entry name" value="Methan_mark_12"/>
</dbReference>
<dbReference type="NCBIfam" id="TIGR03281">
    <property type="entry name" value="methan_mark_12"/>
    <property type="match status" value="1"/>
</dbReference>
<dbReference type="PIRSF" id="PIRSF018783">
    <property type="entry name" value="UCP018783"/>
    <property type="match status" value="1"/>
</dbReference>
<dbReference type="SUPFAM" id="SSF53067">
    <property type="entry name" value="Actin-like ATPase domain"/>
    <property type="match status" value="1"/>
</dbReference>
<reference key="1">
    <citation type="submission" date="2007-03" db="EMBL/GenBank/DDBJ databases">
        <title>Complete sequence of chromosome of Methanococcus maripaludis C5.</title>
        <authorList>
            <consortium name="US DOE Joint Genome Institute"/>
            <person name="Copeland A."/>
            <person name="Lucas S."/>
            <person name="Lapidus A."/>
            <person name="Barry K."/>
            <person name="Glavina del Rio T."/>
            <person name="Dalin E."/>
            <person name="Tice H."/>
            <person name="Pitluck S."/>
            <person name="Chertkov O."/>
            <person name="Brettin T."/>
            <person name="Bruce D."/>
            <person name="Han C."/>
            <person name="Detter J.C."/>
            <person name="Schmutz J."/>
            <person name="Larimer F."/>
            <person name="Land M."/>
            <person name="Hauser L."/>
            <person name="Kyrpides N."/>
            <person name="Mikhailova N."/>
            <person name="Sieprawska-Lupa M."/>
            <person name="Whitman W.B."/>
            <person name="Richardson P."/>
        </authorList>
    </citation>
    <scope>NUCLEOTIDE SEQUENCE [LARGE SCALE GENOMIC DNA]</scope>
    <source>
        <strain>C5 / ATCC BAA-1333</strain>
    </source>
</reference>
<comment type="similarity">
    <text evidence="1">Belongs to the UPF0285 family.</text>
</comment>